<comment type="function">
    <text evidence="3">The phosphoenolpyruvate-dependent sugar phosphotransferase system (sugar PTS), a major carbohydrate active transport system, catalyzes the phosphorylation of incoming sugar substrates concomitantly with their translocation across the cell membrane. The enzyme II CmtAB PTS system is involved in D-mannitol transport.</text>
</comment>
<comment type="subunit">
    <text evidence="3">Homodimer or homotrimer. Seems to be a monomer when not phosphorylated.</text>
</comment>
<comment type="subcellular location">
    <subcellularLocation>
        <location evidence="5">Cytoplasm</location>
    </subcellularLocation>
</comment>
<comment type="domain">
    <text evidence="4">The PTS EIIA type-2 domain is phosphorylated by phospho-HPr on a histidyl residue. Then, it transfers the phosphoryl group to the PTS EIIB type-2 domain.</text>
</comment>
<reference key="1">
    <citation type="journal article" date="2001" name="Lancet">
        <title>Whole genome sequencing of meticillin-resistant Staphylococcus aureus.</title>
        <authorList>
            <person name="Kuroda M."/>
            <person name="Ohta T."/>
            <person name="Uchiyama I."/>
            <person name="Baba T."/>
            <person name="Yuzawa H."/>
            <person name="Kobayashi I."/>
            <person name="Cui L."/>
            <person name="Oguchi A."/>
            <person name="Aoki K."/>
            <person name="Nagai Y."/>
            <person name="Lian J.-Q."/>
            <person name="Ito T."/>
            <person name="Kanamori M."/>
            <person name="Matsumaru H."/>
            <person name="Maruyama A."/>
            <person name="Murakami H."/>
            <person name="Hosoyama A."/>
            <person name="Mizutani-Ui Y."/>
            <person name="Takahashi N.K."/>
            <person name="Sawano T."/>
            <person name="Inoue R."/>
            <person name="Kaito C."/>
            <person name="Sekimizu K."/>
            <person name="Hirakawa H."/>
            <person name="Kuhara S."/>
            <person name="Goto S."/>
            <person name="Yabuzaki J."/>
            <person name="Kanehisa M."/>
            <person name="Yamashita A."/>
            <person name="Oshima K."/>
            <person name="Furuya K."/>
            <person name="Yoshino C."/>
            <person name="Shiba T."/>
            <person name="Hattori M."/>
            <person name="Ogasawara N."/>
            <person name="Hayashi H."/>
            <person name="Hiramatsu K."/>
        </authorList>
    </citation>
    <scope>NUCLEOTIDE SEQUENCE [LARGE SCALE GENOMIC DNA]</scope>
    <source>
        <strain>N315</strain>
    </source>
</reference>
<keyword id="KW-0963">Cytoplasm</keyword>
<keyword id="KW-0418">Kinase</keyword>
<keyword id="KW-0597">Phosphoprotein</keyword>
<keyword id="KW-0598">Phosphotransferase system</keyword>
<keyword id="KW-0762">Sugar transport</keyword>
<keyword id="KW-0808">Transferase</keyword>
<keyword id="KW-0813">Transport</keyword>
<feature type="initiator methionine" description="Removed" evidence="1">
    <location>
        <position position="1"/>
    </location>
</feature>
<feature type="chain" id="PRO_0000186638" description="Mannitol-specific phosphotransferase enzyme IIA component">
    <location>
        <begin position="2"/>
        <end position="144"/>
    </location>
</feature>
<feature type="domain" description="PTS EIIA type-2" evidence="4">
    <location>
        <begin position="3"/>
        <end position="142"/>
    </location>
</feature>
<feature type="active site" description="Tele-phosphohistidine intermediate" evidence="3 4">
    <location>
        <position position="63"/>
    </location>
</feature>
<feature type="modified residue" description="Phosphohistidine; by HPr" evidence="2 3">
    <location>
        <position position="63"/>
    </location>
</feature>
<organism>
    <name type="scientific">Staphylococcus aureus (strain N315)</name>
    <dbReference type="NCBI Taxonomy" id="158879"/>
    <lineage>
        <taxon>Bacteria</taxon>
        <taxon>Bacillati</taxon>
        <taxon>Bacillota</taxon>
        <taxon>Bacilli</taxon>
        <taxon>Bacillales</taxon>
        <taxon>Staphylococcaceae</taxon>
        <taxon>Staphylococcus</taxon>
    </lineage>
</organism>
<dbReference type="EMBL" id="BA000018">
    <property type="protein sequence ID" value="BAB43251.1"/>
    <property type="molecule type" value="Genomic_DNA"/>
</dbReference>
<dbReference type="PIR" id="B90011">
    <property type="entry name" value="B90011"/>
</dbReference>
<dbReference type="RefSeq" id="WP_001292149.1">
    <property type="nucleotide sequence ID" value="NC_002745.2"/>
</dbReference>
<dbReference type="SMR" id="P0A0D8"/>
<dbReference type="EnsemblBacteria" id="BAB43251">
    <property type="protein sequence ID" value="BAB43251"/>
    <property type="gene ID" value="BAB43251"/>
</dbReference>
<dbReference type="KEGG" id="sau:SA1962"/>
<dbReference type="HOGENOM" id="CLU_072531_3_0_9"/>
<dbReference type="GO" id="GO:0005737">
    <property type="term" value="C:cytoplasm"/>
    <property type="evidence" value="ECO:0007669"/>
    <property type="project" value="UniProtKB-SubCell"/>
</dbReference>
<dbReference type="GO" id="GO:0005886">
    <property type="term" value="C:plasma membrane"/>
    <property type="evidence" value="ECO:0007669"/>
    <property type="project" value="TreeGrafter"/>
</dbReference>
<dbReference type="GO" id="GO:0016301">
    <property type="term" value="F:kinase activity"/>
    <property type="evidence" value="ECO:0007669"/>
    <property type="project" value="UniProtKB-KW"/>
</dbReference>
<dbReference type="GO" id="GO:0090563">
    <property type="term" value="F:protein-phosphocysteine-sugar phosphotransferase activity"/>
    <property type="evidence" value="ECO:0007669"/>
    <property type="project" value="TreeGrafter"/>
</dbReference>
<dbReference type="GO" id="GO:0009401">
    <property type="term" value="P:phosphoenolpyruvate-dependent sugar phosphotransferase system"/>
    <property type="evidence" value="ECO:0007669"/>
    <property type="project" value="UniProtKB-KW"/>
</dbReference>
<dbReference type="CDD" id="cd00211">
    <property type="entry name" value="PTS_IIA_fru"/>
    <property type="match status" value="1"/>
</dbReference>
<dbReference type="Gene3D" id="3.40.930.10">
    <property type="entry name" value="Mannitol-specific EII, Chain A"/>
    <property type="match status" value="1"/>
</dbReference>
<dbReference type="InterPro" id="IPR016152">
    <property type="entry name" value="PTrfase/Anion_transptr"/>
</dbReference>
<dbReference type="InterPro" id="IPR002178">
    <property type="entry name" value="PTS_EIIA_type-2_dom"/>
</dbReference>
<dbReference type="InterPro" id="IPR050893">
    <property type="entry name" value="Sugar_PTS"/>
</dbReference>
<dbReference type="PANTHER" id="PTHR30181">
    <property type="entry name" value="MANNITOL PERMEASE IIC COMPONENT"/>
    <property type="match status" value="1"/>
</dbReference>
<dbReference type="PANTHER" id="PTHR30181:SF2">
    <property type="entry name" value="PTS SYSTEM MANNITOL-SPECIFIC EIICBA COMPONENT"/>
    <property type="match status" value="1"/>
</dbReference>
<dbReference type="Pfam" id="PF00359">
    <property type="entry name" value="PTS_EIIA_2"/>
    <property type="match status" value="1"/>
</dbReference>
<dbReference type="SUPFAM" id="SSF55804">
    <property type="entry name" value="Phoshotransferase/anion transport protein"/>
    <property type="match status" value="1"/>
</dbReference>
<dbReference type="PROSITE" id="PS51094">
    <property type="entry name" value="PTS_EIIA_TYPE_2"/>
    <property type="match status" value="1"/>
</dbReference>
<dbReference type="PROSITE" id="PS00372">
    <property type="entry name" value="PTS_EIIA_TYPE_2_HIS"/>
    <property type="match status" value="1"/>
</dbReference>
<protein>
    <recommendedName>
        <fullName evidence="3">Mannitol-specific phosphotransferase enzyme IIA component</fullName>
    </recommendedName>
    <alternativeName>
        <fullName evidence="3">EIIA</fullName>
    </alternativeName>
    <alternativeName>
        <fullName evidence="3">EIII</fullName>
    </alternativeName>
    <alternativeName>
        <fullName evidence="3">PTS system mannitol-specific EIIA component</fullName>
    </alternativeName>
</protein>
<accession>P0A0D8</accession>
<accession>P17875</accession>
<accession>Q9RL67</accession>
<name>PTMA_STAAN</name>
<sequence>MSELFSNDNIFLNVNVNSQNEAIEKAGKALVDSGAVTDAYIQAMKDREQVVSTFMGNGLAIPHGTDEAKTNVIHSGLTLLQIPEGVDWDGEVVKVVVGIAGKDGEHLDLLSKIAITFSEEENVDRIVQAKSAEEIKQVFEEADA</sequence>
<evidence type="ECO:0000250" key="1"/>
<evidence type="ECO:0000250" key="2">
    <source>
        <dbReference type="UniProtKB" id="P00550"/>
    </source>
</evidence>
<evidence type="ECO:0000250" key="3">
    <source>
        <dbReference type="UniProtKB" id="P0A0E0"/>
    </source>
</evidence>
<evidence type="ECO:0000255" key="4">
    <source>
        <dbReference type="PROSITE-ProRule" id="PRU00417"/>
    </source>
</evidence>
<evidence type="ECO:0000305" key="5"/>
<proteinExistence type="inferred from homology"/>
<gene>
    <name type="primary">mtlF</name>
    <name type="synonym">mtlA</name>
    <name type="ordered locus">SA1962</name>
</gene>